<gene>
    <name type="ORF">CG3558</name>
</gene>
<accession>Q9VQK0</accession>
<accession>B7Z000</accession>
<accession>Q8IPZ4</accession>
<accession>Q95SN7</accession>
<feature type="chain" id="PRO_0000319580" description="FHIP family protein CG3558">
    <location>
        <begin position="1"/>
        <end position="1041"/>
    </location>
</feature>
<feature type="region of interest" description="Disordered" evidence="1">
    <location>
        <begin position="619"/>
        <end position="648"/>
    </location>
</feature>
<feature type="region of interest" description="Disordered" evidence="1">
    <location>
        <begin position="792"/>
        <end position="818"/>
    </location>
</feature>
<feature type="region of interest" description="Disordered" evidence="1">
    <location>
        <begin position="858"/>
        <end position="879"/>
    </location>
</feature>
<feature type="region of interest" description="Disordered" evidence="1">
    <location>
        <begin position="903"/>
        <end position="947"/>
    </location>
</feature>
<feature type="region of interest" description="Disordered" evidence="1">
    <location>
        <begin position="959"/>
        <end position="986"/>
    </location>
</feature>
<feature type="compositionally biased region" description="Polar residues" evidence="1">
    <location>
        <begin position="628"/>
        <end position="637"/>
    </location>
</feature>
<feature type="compositionally biased region" description="Polar residues" evidence="1">
    <location>
        <begin position="800"/>
        <end position="818"/>
    </location>
</feature>
<feature type="compositionally biased region" description="Polar residues" evidence="1">
    <location>
        <begin position="903"/>
        <end position="925"/>
    </location>
</feature>
<feature type="compositionally biased region" description="Low complexity" evidence="1">
    <location>
        <begin position="927"/>
        <end position="947"/>
    </location>
</feature>
<feature type="compositionally biased region" description="Polar residues" evidence="1">
    <location>
        <begin position="959"/>
        <end position="968"/>
    </location>
</feature>
<feature type="modified residue" description="Phosphoserine" evidence="2">
    <location>
        <position position="490"/>
    </location>
</feature>
<feature type="modified residue" description="Phosphoserine" evidence="2">
    <location>
        <position position="797"/>
    </location>
</feature>
<feature type="splice variant" id="VSP_037630" description="In isoform C." evidence="4">
    <original>L</original>
    <variation>LQTLKGKHF</variation>
    <location>
        <position position="356"/>
    </location>
</feature>
<feature type="splice variant" id="VSP_031496" description="In isoform B." evidence="3">
    <location>
        <begin position="877"/>
        <end position="889"/>
    </location>
</feature>
<sequence length="1041" mass="113845">MWLRQSSGGGVASVGHVGPLRQRPIDAATDCDPRACYDSFCKHWQQAFEIIQHSAPPSHDDVLGVVSHLDYMVTLLLVELHHCNKVSLPAAEASGPPAAPCLEFLLSENLLDKLYEWACTTGRYANAVRLEQLKLYELLVSHSRHQLLCHEPFLRPLLKILASSQGEIFPPDLEKRLVILLNQLCVVLMQNVHLLDLFFFSAQTQVQEQILNGNVAPPKSGTTTNFIIFSLLIPYVHREGSLGHQARDALLLCMALSQKNSNIGTYIAQYSSICPLLVTGLGGLYSRLPNSIEISSIDWHRITPDDVTEIPELTLFMNALEFCNAVVQVAHEMIKQQLLDFMYQGFIVPVLGPAILQTNIDSQISAMSYLDLILRSITEPGLLRAFVRFLLDTEKFDGERILDALVERLNSPDANLCMVTMALFDTLLGLHCEDLMLELLLKFMLPGKHVPISHRHKINKIDPYLNSSEFFLELSPDVMKRARDLARPKSVHEPVVSELTPLPSLPSPVMSKTIGANWNYYGVHTGDSLYANIQAYLFEAHWRIAQCQKDCLKWANSYRYQKWPRHGQGRVHAHALELARQFFSEFGGGPIAANETGEKQLDSLQSIGESSGYESFKWRPADEESEATDTTVATTASEADMDHNSSSLSSVLGASGKRESWRTSNSNRNELILTDLDFSEDLFAQGTVSLGPFLNAIWGKLQTFTSNSLYVNLHLTGLITRLAWYPLPLIHSLLLRSDIAITSDTPSFHQVLRILKQQIDAELPVTEDSLEIIDVARSSLIDREFRLANARKGNEGSPMHHSQQQQMVTNSGQQQGQLRSAYATLSAATPVQATPTSAYDPFKRSDNKRRSISKSITSMFSRKSASTSTAPPNGSSASSGLSQIYAFFTGAASNLVGNNASNDGRGISQAQTSAGTCETSLSTQPPAGASRTGANATSTAASGSNSSIAGSTLTLSAQSNTTTHSASTLHGLDGGPSTGGFNSEPASLDSVASMGIIASTSGTERSRDLALCAVLMDEWLKELAAIAQEQSVVLVTEQGSL</sequence>
<keyword id="KW-0025">Alternative splicing</keyword>
<keyword id="KW-0597">Phosphoprotein</keyword>
<keyword id="KW-1185">Reference proteome</keyword>
<comment type="alternative products">
    <event type="alternative splicing"/>
    <isoform>
        <id>Q9VQK0-1</id>
        <name>A</name>
        <sequence type="displayed"/>
    </isoform>
    <isoform>
        <id>Q9VQK0-3</id>
        <name>C</name>
        <sequence type="described" ref="VSP_037630"/>
    </isoform>
    <isoform>
        <id>Q9VQK0-2</id>
        <name>B</name>
        <sequence type="described" ref="VSP_031496"/>
    </isoform>
</comment>
<comment type="similarity">
    <text evidence="4">Belongs to the FHIP family.</text>
</comment>
<comment type="sequence caution" evidence="4">
    <conflict type="erroneous initiation">
        <sequence resource="EMBL-CDS" id="AAL28233"/>
    </conflict>
</comment>
<reference key="1">
    <citation type="journal article" date="2000" name="Science">
        <title>The genome sequence of Drosophila melanogaster.</title>
        <authorList>
            <person name="Adams M.D."/>
            <person name="Celniker S.E."/>
            <person name="Holt R.A."/>
            <person name="Evans C.A."/>
            <person name="Gocayne J.D."/>
            <person name="Amanatides P.G."/>
            <person name="Scherer S.E."/>
            <person name="Li P.W."/>
            <person name="Hoskins R.A."/>
            <person name="Galle R.F."/>
            <person name="George R.A."/>
            <person name="Lewis S.E."/>
            <person name="Richards S."/>
            <person name="Ashburner M."/>
            <person name="Henderson S.N."/>
            <person name="Sutton G.G."/>
            <person name="Wortman J.R."/>
            <person name="Yandell M.D."/>
            <person name="Zhang Q."/>
            <person name="Chen L.X."/>
            <person name="Brandon R.C."/>
            <person name="Rogers Y.-H.C."/>
            <person name="Blazej R.G."/>
            <person name="Champe M."/>
            <person name="Pfeiffer B.D."/>
            <person name="Wan K.H."/>
            <person name="Doyle C."/>
            <person name="Baxter E.G."/>
            <person name="Helt G."/>
            <person name="Nelson C.R."/>
            <person name="Miklos G.L.G."/>
            <person name="Abril J.F."/>
            <person name="Agbayani A."/>
            <person name="An H.-J."/>
            <person name="Andrews-Pfannkoch C."/>
            <person name="Baldwin D."/>
            <person name="Ballew R.M."/>
            <person name="Basu A."/>
            <person name="Baxendale J."/>
            <person name="Bayraktaroglu L."/>
            <person name="Beasley E.M."/>
            <person name="Beeson K.Y."/>
            <person name="Benos P.V."/>
            <person name="Berman B.P."/>
            <person name="Bhandari D."/>
            <person name="Bolshakov S."/>
            <person name="Borkova D."/>
            <person name="Botchan M.R."/>
            <person name="Bouck J."/>
            <person name="Brokstein P."/>
            <person name="Brottier P."/>
            <person name="Burtis K.C."/>
            <person name="Busam D.A."/>
            <person name="Butler H."/>
            <person name="Cadieu E."/>
            <person name="Center A."/>
            <person name="Chandra I."/>
            <person name="Cherry J.M."/>
            <person name="Cawley S."/>
            <person name="Dahlke C."/>
            <person name="Davenport L.B."/>
            <person name="Davies P."/>
            <person name="de Pablos B."/>
            <person name="Delcher A."/>
            <person name="Deng Z."/>
            <person name="Mays A.D."/>
            <person name="Dew I."/>
            <person name="Dietz S.M."/>
            <person name="Dodson K."/>
            <person name="Doup L.E."/>
            <person name="Downes M."/>
            <person name="Dugan-Rocha S."/>
            <person name="Dunkov B.C."/>
            <person name="Dunn P."/>
            <person name="Durbin K.J."/>
            <person name="Evangelista C.C."/>
            <person name="Ferraz C."/>
            <person name="Ferriera S."/>
            <person name="Fleischmann W."/>
            <person name="Fosler C."/>
            <person name="Gabrielian A.E."/>
            <person name="Garg N.S."/>
            <person name="Gelbart W.M."/>
            <person name="Glasser K."/>
            <person name="Glodek A."/>
            <person name="Gong F."/>
            <person name="Gorrell J.H."/>
            <person name="Gu Z."/>
            <person name="Guan P."/>
            <person name="Harris M."/>
            <person name="Harris N.L."/>
            <person name="Harvey D.A."/>
            <person name="Heiman T.J."/>
            <person name="Hernandez J.R."/>
            <person name="Houck J."/>
            <person name="Hostin D."/>
            <person name="Houston K.A."/>
            <person name="Howland T.J."/>
            <person name="Wei M.-H."/>
            <person name="Ibegwam C."/>
            <person name="Jalali M."/>
            <person name="Kalush F."/>
            <person name="Karpen G.H."/>
            <person name="Ke Z."/>
            <person name="Kennison J.A."/>
            <person name="Ketchum K.A."/>
            <person name="Kimmel B.E."/>
            <person name="Kodira C.D."/>
            <person name="Kraft C.L."/>
            <person name="Kravitz S."/>
            <person name="Kulp D."/>
            <person name="Lai Z."/>
            <person name="Lasko P."/>
            <person name="Lei Y."/>
            <person name="Levitsky A.A."/>
            <person name="Li J.H."/>
            <person name="Li Z."/>
            <person name="Liang Y."/>
            <person name="Lin X."/>
            <person name="Liu X."/>
            <person name="Mattei B."/>
            <person name="McIntosh T.C."/>
            <person name="McLeod M.P."/>
            <person name="McPherson D."/>
            <person name="Merkulov G."/>
            <person name="Milshina N.V."/>
            <person name="Mobarry C."/>
            <person name="Morris J."/>
            <person name="Moshrefi A."/>
            <person name="Mount S.M."/>
            <person name="Moy M."/>
            <person name="Murphy B."/>
            <person name="Murphy L."/>
            <person name="Muzny D.M."/>
            <person name="Nelson D.L."/>
            <person name="Nelson D.R."/>
            <person name="Nelson K.A."/>
            <person name="Nixon K."/>
            <person name="Nusskern D.R."/>
            <person name="Pacleb J.M."/>
            <person name="Palazzolo M."/>
            <person name="Pittman G.S."/>
            <person name="Pan S."/>
            <person name="Pollard J."/>
            <person name="Puri V."/>
            <person name="Reese M.G."/>
            <person name="Reinert K."/>
            <person name="Remington K."/>
            <person name="Saunders R.D.C."/>
            <person name="Scheeler F."/>
            <person name="Shen H."/>
            <person name="Shue B.C."/>
            <person name="Siden-Kiamos I."/>
            <person name="Simpson M."/>
            <person name="Skupski M.P."/>
            <person name="Smith T.J."/>
            <person name="Spier E."/>
            <person name="Spradling A.C."/>
            <person name="Stapleton M."/>
            <person name="Strong R."/>
            <person name="Sun E."/>
            <person name="Svirskas R."/>
            <person name="Tector C."/>
            <person name="Turner R."/>
            <person name="Venter E."/>
            <person name="Wang A.H."/>
            <person name="Wang X."/>
            <person name="Wang Z.-Y."/>
            <person name="Wassarman D.A."/>
            <person name="Weinstock G.M."/>
            <person name="Weissenbach J."/>
            <person name="Williams S.M."/>
            <person name="Woodage T."/>
            <person name="Worley K.C."/>
            <person name="Wu D."/>
            <person name="Yang S."/>
            <person name="Yao Q.A."/>
            <person name="Ye J."/>
            <person name="Yeh R.-F."/>
            <person name="Zaveri J.S."/>
            <person name="Zhan M."/>
            <person name="Zhang G."/>
            <person name="Zhao Q."/>
            <person name="Zheng L."/>
            <person name="Zheng X.H."/>
            <person name="Zhong F.N."/>
            <person name="Zhong W."/>
            <person name="Zhou X."/>
            <person name="Zhu S.C."/>
            <person name="Zhu X."/>
            <person name="Smith H.O."/>
            <person name="Gibbs R.A."/>
            <person name="Myers E.W."/>
            <person name="Rubin G.M."/>
            <person name="Venter J.C."/>
        </authorList>
    </citation>
    <scope>NUCLEOTIDE SEQUENCE [LARGE SCALE GENOMIC DNA]</scope>
    <source>
        <strain>Berkeley</strain>
    </source>
</reference>
<reference key="2">
    <citation type="journal article" date="2002" name="Genome Biol.">
        <title>Annotation of the Drosophila melanogaster euchromatic genome: a systematic review.</title>
        <authorList>
            <person name="Misra S."/>
            <person name="Crosby M.A."/>
            <person name="Mungall C.J."/>
            <person name="Matthews B.B."/>
            <person name="Campbell K.S."/>
            <person name="Hradecky P."/>
            <person name="Huang Y."/>
            <person name="Kaminker J.S."/>
            <person name="Millburn G.H."/>
            <person name="Prochnik S.E."/>
            <person name="Smith C.D."/>
            <person name="Tupy J.L."/>
            <person name="Whitfield E.J."/>
            <person name="Bayraktaroglu L."/>
            <person name="Berman B.P."/>
            <person name="Bettencourt B.R."/>
            <person name="Celniker S.E."/>
            <person name="de Grey A.D.N.J."/>
            <person name="Drysdale R.A."/>
            <person name="Harris N.L."/>
            <person name="Richter J."/>
            <person name="Russo S."/>
            <person name="Schroeder A.J."/>
            <person name="Shu S.Q."/>
            <person name="Stapleton M."/>
            <person name="Yamada C."/>
            <person name="Ashburner M."/>
            <person name="Gelbart W.M."/>
            <person name="Rubin G.M."/>
            <person name="Lewis S.E."/>
        </authorList>
    </citation>
    <scope>GENOME REANNOTATION</scope>
    <scope>ALTERNATIVE SPLICING</scope>
    <source>
        <strain>Berkeley</strain>
    </source>
</reference>
<reference key="3">
    <citation type="submission" date="2005-03" db="EMBL/GenBank/DDBJ databases">
        <authorList>
            <person name="Stapleton M."/>
            <person name="Carlson J.W."/>
            <person name="Chavez C."/>
            <person name="Frise E."/>
            <person name="George R.A."/>
            <person name="Pacleb J.M."/>
            <person name="Park S."/>
            <person name="Wan K.H."/>
            <person name="Yu C."/>
            <person name="Rubin G.M."/>
            <person name="Celniker S.E."/>
        </authorList>
    </citation>
    <scope>NUCLEOTIDE SEQUENCE [LARGE SCALE MRNA] (ISOFORM A)</scope>
    <source>
        <strain>Berkeley</strain>
        <tissue>Embryo</tissue>
    </source>
</reference>
<reference key="4">
    <citation type="journal article" date="2002" name="Genome Biol.">
        <title>A Drosophila full-length cDNA resource.</title>
        <authorList>
            <person name="Stapleton M."/>
            <person name="Carlson J.W."/>
            <person name="Brokstein P."/>
            <person name="Yu C."/>
            <person name="Champe M."/>
            <person name="George R.A."/>
            <person name="Guarin H."/>
            <person name="Kronmiller B."/>
            <person name="Pacleb J.M."/>
            <person name="Park S."/>
            <person name="Wan K.H."/>
            <person name="Rubin G.M."/>
            <person name="Celniker S.E."/>
        </authorList>
    </citation>
    <scope>NUCLEOTIDE SEQUENCE [LARGE SCALE MRNA] OF 517-1041 (ISOFORM B)</scope>
    <source>
        <strain>Berkeley</strain>
        <tissue>Head</tissue>
    </source>
</reference>
<reference key="5">
    <citation type="journal article" date="2008" name="J. Proteome Res.">
        <title>Phosphoproteome analysis of Drosophila melanogaster embryos.</title>
        <authorList>
            <person name="Zhai B."/>
            <person name="Villen J."/>
            <person name="Beausoleil S.A."/>
            <person name="Mintseris J."/>
            <person name="Gygi S.P."/>
        </authorList>
    </citation>
    <scope>PHOSPHORYLATION [LARGE SCALE ANALYSIS] AT SER-490 AND SER-797</scope>
    <scope>IDENTIFICATION BY MASS SPECTROMETRY</scope>
    <source>
        <tissue>Embryo</tissue>
    </source>
</reference>
<evidence type="ECO:0000256" key="1">
    <source>
        <dbReference type="SAM" id="MobiDB-lite"/>
    </source>
</evidence>
<evidence type="ECO:0000269" key="2">
    <source>
    </source>
</evidence>
<evidence type="ECO:0000303" key="3">
    <source>
    </source>
</evidence>
<evidence type="ECO:0000305" key="4"/>
<organism>
    <name type="scientific">Drosophila melanogaster</name>
    <name type="common">Fruit fly</name>
    <dbReference type="NCBI Taxonomy" id="7227"/>
    <lineage>
        <taxon>Eukaryota</taxon>
        <taxon>Metazoa</taxon>
        <taxon>Ecdysozoa</taxon>
        <taxon>Arthropoda</taxon>
        <taxon>Hexapoda</taxon>
        <taxon>Insecta</taxon>
        <taxon>Pterygota</taxon>
        <taxon>Neoptera</taxon>
        <taxon>Endopterygota</taxon>
        <taxon>Diptera</taxon>
        <taxon>Brachycera</taxon>
        <taxon>Muscomorpha</taxon>
        <taxon>Ephydroidea</taxon>
        <taxon>Drosophilidae</taxon>
        <taxon>Drosophila</taxon>
        <taxon>Sophophora</taxon>
    </lineage>
</organism>
<protein>
    <recommendedName>
        <fullName>FHIP family protein CG3558</fullName>
    </recommendedName>
</protein>
<proteinExistence type="evidence at protein level"/>
<name>U518_DROME</name>
<dbReference type="EMBL" id="AE014134">
    <property type="protein sequence ID" value="AAF51167.1"/>
    <property type="molecule type" value="Genomic_DNA"/>
</dbReference>
<dbReference type="EMBL" id="AE014134">
    <property type="protein sequence ID" value="AAN10405.1"/>
    <property type="molecule type" value="Genomic_DNA"/>
</dbReference>
<dbReference type="EMBL" id="AE014134">
    <property type="protein sequence ID" value="ACL82984.1"/>
    <property type="molecule type" value="Genomic_DNA"/>
</dbReference>
<dbReference type="EMBL" id="BT021330">
    <property type="protein sequence ID" value="AAX33478.1"/>
    <property type="molecule type" value="mRNA"/>
</dbReference>
<dbReference type="EMBL" id="AY060685">
    <property type="protein sequence ID" value="AAL28233.1"/>
    <property type="status" value="ALT_INIT"/>
    <property type="molecule type" value="mRNA"/>
</dbReference>
<dbReference type="RefSeq" id="NP_001137777.1">
    <molecule id="Q9VQK0-3"/>
    <property type="nucleotide sequence ID" value="NM_001144305.2"/>
</dbReference>
<dbReference type="RefSeq" id="NP_652064.2">
    <molecule id="Q9VQK0-1"/>
    <property type="nucleotide sequence ID" value="NM_143807.3"/>
</dbReference>
<dbReference type="RefSeq" id="NP_722866.1">
    <molecule id="Q9VQK0-2"/>
    <property type="nucleotide sequence ID" value="NM_164519.2"/>
</dbReference>
<dbReference type="SMR" id="Q9VQK0"/>
<dbReference type="BioGRID" id="71376">
    <property type="interactions" value="4"/>
</dbReference>
<dbReference type="FunCoup" id="Q9VQK0">
    <property type="interactions" value="67"/>
</dbReference>
<dbReference type="IntAct" id="Q9VQK0">
    <property type="interactions" value="3"/>
</dbReference>
<dbReference type="STRING" id="7227.FBpp0271738"/>
<dbReference type="iPTMnet" id="Q9VQK0"/>
<dbReference type="PaxDb" id="7227-FBpp0271738"/>
<dbReference type="DNASU" id="48421"/>
<dbReference type="EnsemblMetazoa" id="FBtr0077644">
    <molecule id="Q9VQK0-1"/>
    <property type="protein sequence ID" value="FBpp0077329"/>
    <property type="gene ID" value="FBgn0025681"/>
</dbReference>
<dbReference type="EnsemblMetazoa" id="FBtr0077645">
    <molecule id="Q9VQK0-2"/>
    <property type="protein sequence ID" value="FBpp0077330"/>
    <property type="gene ID" value="FBgn0025681"/>
</dbReference>
<dbReference type="EnsemblMetazoa" id="FBtr0273230">
    <molecule id="Q9VQK0-3"/>
    <property type="protein sequence ID" value="FBpp0271738"/>
    <property type="gene ID" value="FBgn0025681"/>
</dbReference>
<dbReference type="GeneID" id="48421"/>
<dbReference type="KEGG" id="dme:Dmel_CG3558"/>
<dbReference type="UCSC" id="CG3558-RA">
    <molecule id="Q9VQK0-1"/>
    <property type="organism name" value="d. melanogaster"/>
</dbReference>
<dbReference type="AGR" id="FB:FBgn0025681"/>
<dbReference type="FlyBase" id="FBgn0025681">
    <property type="gene designation" value="CG3558"/>
</dbReference>
<dbReference type="VEuPathDB" id="VectorBase:FBgn0025681"/>
<dbReference type="eggNOG" id="KOG3695">
    <property type="taxonomic scope" value="Eukaryota"/>
</dbReference>
<dbReference type="GeneTree" id="ENSGT00950000182936"/>
<dbReference type="InParanoid" id="Q9VQK0"/>
<dbReference type="OMA" id="RMPSLVQ"/>
<dbReference type="OrthoDB" id="6287422at2759"/>
<dbReference type="PhylomeDB" id="Q9VQK0"/>
<dbReference type="BioGRID-ORCS" id="48421">
    <property type="hits" value="0 hits in 3 CRISPR screens"/>
</dbReference>
<dbReference type="GenomeRNAi" id="48421"/>
<dbReference type="PRO" id="PR:Q9VQK0"/>
<dbReference type="Proteomes" id="UP000000803">
    <property type="component" value="Chromosome 2L"/>
</dbReference>
<dbReference type="Bgee" id="FBgn0025681">
    <property type="expression patterns" value="Expressed in outer photoreceptor cell (Drosophila) in insect head and 245 other cell types or tissues"/>
</dbReference>
<dbReference type="ExpressionAtlas" id="Q9VQK0">
    <property type="expression patterns" value="baseline and differential"/>
</dbReference>
<dbReference type="InterPro" id="IPR019384">
    <property type="entry name" value="FHIP"/>
</dbReference>
<dbReference type="InterPro" id="IPR045669">
    <property type="entry name" value="FHIP_C"/>
</dbReference>
<dbReference type="InterPro" id="IPR045668">
    <property type="entry name" value="FHIP_KELAA_motif"/>
</dbReference>
<dbReference type="PANTHER" id="PTHR21705:SF11">
    <property type="entry name" value="FHIP FAMILY PROTEIN CG3558"/>
    <property type="match status" value="1"/>
</dbReference>
<dbReference type="PANTHER" id="PTHR21705">
    <property type="entry name" value="RAI16 PROTEIN-RELATED"/>
    <property type="match status" value="1"/>
</dbReference>
<dbReference type="Pfam" id="PF19314">
    <property type="entry name" value="DUF5917"/>
    <property type="match status" value="1"/>
</dbReference>
<dbReference type="Pfam" id="PF19311">
    <property type="entry name" value="KELAA"/>
    <property type="match status" value="1"/>
</dbReference>
<dbReference type="Pfam" id="PF10257">
    <property type="entry name" value="RAI16-like"/>
    <property type="match status" value="1"/>
</dbReference>